<evidence type="ECO:0000255" key="1">
    <source>
        <dbReference type="HAMAP-Rule" id="MF_00613"/>
    </source>
</evidence>
<organism>
    <name type="scientific">Prochlorococcus marinus (strain MIT 9301)</name>
    <dbReference type="NCBI Taxonomy" id="167546"/>
    <lineage>
        <taxon>Bacteria</taxon>
        <taxon>Bacillati</taxon>
        <taxon>Cyanobacteriota</taxon>
        <taxon>Cyanophyceae</taxon>
        <taxon>Synechococcales</taxon>
        <taxon>Prochlorococcaceae</taxon>
        <taxon>Prochlorococcus</taxon>
    </lineage>
</organism>
<comment type="function">
    <text evidence="1">Stabilizes the interaction between PsaC and the PSI core, assists the docking of the ferredoxin to PSI and interacts with ferredoxin-NADP oxidoreductase.</text>
</comment>
<comment type="subcellular location">
    <subcellularLocation>
        <location evidence="1">Cellular thylakoid membrane</location>
        <topology evidence="1">Peripheral membrane protein</topology>
    </subcellularLocation>
</comment>
<comment type="similarity">
    <text evidence="1">Belongs to the PsaE family.</text>
</comment>
<keyword id="KW-0472">Membrane</keyword>
<keyword id="KW-0602">Photosynthesis</keyword>
<keyword id="KW-0603">Photosystem I</keyword>
<keyword id="KW-1185">Reference proteome</keyword>
<keyword id="KW-0793">Thylakoid</keyword>
<proteinExistence type="inferred from homology"/>
<sequence length="69" mass="7563">MAISRGDLVRVKRPESYWYNEIGKVASVDTSGIKYNCVVRFDKVNYAGISGTDGGANTNNFAESELEKA</sequence>
<protein>
    <recommendedName>
        <fullName evidence="1">Photosystem I reaction center subunit IV</fullName>
    </recommendedName>
</protein>
<feature type="chain" id="PRO_1000061304" description="Photosystem I reaction center subunit IV">
    <location>
        <begin position="1"/>
        <end position="69"/>
    </location>
</feature>
<name>PSAE_PROM0</name>
<reference key="1">
    <citation type="journal article" date="2007" name="PLoS Genet.">
        <title>Patterns and implications of gene gain and loss in the evolution of Prochlorococcus.</title>
        <authorList>
            <person name="Kettler G.C."/>
            <person name="Martiny A.C."/>
            <person name="Huang K."/>
            <person name="Zucker J."/>
            <person name="Coleman M.L."/>
            <person name="Rodrigue S."/>
            <person name="Chen F."/>
            <person name="Lapidus A."/>
            <person name="Ferriera S."/>
            <person name="Johnson J."/>
            <person name="Steglich C."/>
            <person name="Church G.M."/>
            <person name="Richardson P."/>
            <person name="Chisholm S.W."/>
        </authorList>
    </citation>
    <scope>NUCLEOTIDE SEQUENCE [LARGE SCALE GENOMIC DNA]</scope>
    <source>
        <strain>MIT 9301</strain>
    </source>
</reference>
<accession>A3PB54</accession>
<gene>
    <name evidence="1" type="primary">psaE</name>
    <name type="ordered locus">P9301_03561</name>
</gene>
<dbReference type="EMBL" id="CP000576">
    <property type="protein sequence ID" value="ABO16979.1"/>
    <property type="molecule type" value="Genomic_DNA"/>
</dbReference>
<dbReference type="RefSeq" id="WP_011817817.1">
    <property type="nucleotide sequence ID" value="NC_009091.1"/>
</dbReference>
<dbReference type="SMR" id="A3PB54"/>
<dbReference type="STRING" id="167546.P9301_03561"/>
<dbReference type="KEGG" id="pmg:P9301_03561"/>
<dbReference type="eggNOG" id="ENOG503313D">
    <property type="taxonomic scope" value="Bacteria"/>
</dbReference>
<dbReference type="HOGENOM" id="CLU_136462_2_1_3"/>
<dbReference type="OrthoDB" id="427926at2"/>
<dbReference type="Proteomes" id="UP000001430">
    <property type="component" value="Chromosome"/>
</dbReference>
<dbReference type="GO" id="GO:0009538">
    <property type="term" value="C:photosystem I reaction center"/>
    <property type="evidence" value="ECO:0007669"/>
    <property type="project" value="InterPro"/>
</dbReference>
<dbReference type="GO" id="GO:0031676">
    <property type="term" value="C:plasma membrane-derived thylakoid membrane"/>
    <property type="evidence" value="ECO:0007669"/>
    <property type="project" value="UniProtKB-SubCell"/>
</dbReference>
<dbReference type="GO" id="GO:0015979">
    <property type="term" value="P:photosynthesis"/>
    <property type="evidence" value="ECO:0007669"/>
    <property type="project" value="UniProtKB-UniRule"/>
</dbReference>
<dbReference type="Gene3D" id="2.30.30.50">
    <property type="match status" value="1"/>
</dbReference>
<dbReference type="HAMAP" id="MF_00613">
    <property type="entry name" value="PSI_PsaE"/>
    <property type="match status" value="1"/>
</dbReference>
<dbReference type="InterPro" id="IPR008990">
    <property type="entry name" value="Elect_transpt_acc-like_dom_sf"/>
</dbReference>
<dbReference type="InterPro" id="IPR003375">
    <property type="entry name" value="PSI_PsaE"/>
</dbReference>
<dbReference type="NCBIfam" id="NF002745">
    <property type="entry name" value="PRK02749.1"/>
    <property type="match status" value="1"/>
</dbReference>
<dbReference type="PANTHER" id="PTHR34549">
    <property type="entry name" value="PHOTOSYSTEM I REACTION CENTER SUBUNIT IV A, CHLOROPLASTIC-RELATED"/>
    <property type="match status" value="1"/>
</dbReference>
<dbReference type="PANTHER" id="PTHR34549:SF2">
    <property type="entry name" value="PHOTOSYSTEM I SUBUNIT IV"/>
    <property type="match status" value="1"/>
</dbReference>
<dbReference type="Pfam" id="PF02427">
    <property type="entry name" value="PSI_PsaE"/>
    <property type="match status" value="1"/>
</dbReference>
<dbReference type="SUPFAM" id="SSF50090">
    <property type="entry name" value="Electron transport accessory proteins"/>
    <property type="match status" value="1"/>
</dbReference>